<feature type="chain" id="PRO_0000328048" description="Chloride channel protein F">
    <location>
        <begin position="1"/>
        <end position="809"/>
    </location>
</feature>
<feature type="topological domain" description="Cytoplasmic" evidence="2">
    <location>
        <begin position="1"/>
        <end position="65"/>
    </location>
</feature>
<feature type="transmembrane region" description="Helical" evidence="2">
    <location>
        <begin position="66"/>
        <end position="86"/>
    </location>
</feature>
<feature type="transmembrane region" description="Helical" evidence="2">
    <location>
        <begin position="110"/>
        <end position="130"/>
    </location>
</feature>
<feature type="transmembrane region" description="Helical" evidence="2">
    <location>
        <begin position="152"/>
        <end position="172"/>
    </location>
</feature>
<feature type="transmembrane region" description="Helical" evidence="2">
    <location>
        <begin position="218"/>
        <end position="238"/>
    </location>
</feature>
<feature type="transmembrane region" description="Helical" evidence="2">
    <location>
        <begin position="246"/>
        <end position="266"/>
    </location>
</feature>
<feature type="transmembrane region" description="Helical" evidence="2">
    <location>
        <begin position="295"/>
        <end position="315"/>
    </location>
</feature>
<feature type="transmembrane region" description="Helical" evidence="2">
    <location>
        <begin position="333"/>
        <end position="353"/>
    </location>
</feature>
<feature type="transmembrane region" description="Helical" evidence="2">
    <location>
        <begin position="395"/>
        <end position="415"/>
    </location>
</feature>
<feature type="transmembrane region" description="Helical" evidence="2">
    <location>
        <begin position="425"/>
        <end position="445"/>
    </location>
</feature>
<feature type="transmembrane region" description="Helical" evidence="2">
    <location>
        <begin position="459"/>
        <end position="479"/>
    </location>
</feature>
<feature type="transmembrane region" description="Helical" evidence="2">
    <location>
        <begin position="486"/>
        <end position="506"/>
    </location>
</feature>
<feature type="domain" description="CBS 1" evidence="3">
    <location>
        <begin position="539"/>
        <end position="597"/>
    </location>
</feature>
<feature type="domain" description="CBS 2" evidence="3">
    <location>
        <begin position="756"/>
        <end position="809"/>
    </location>
</feature>
<feature type="region of interest" description="Disordered" evidence="4">
    <location>
        <begin position="604"/>
        <end position="646"/>
    </location>
</feature>
<feature type="region of interest" description="Disordered" evidence="4">
    <location>
        <begin position="692"/>
        <end position="729"/>
    </location>
</feature>
<feature type="compositionally biased region" description="Low complexity" evidence="4">
    <location>
        <begin position="620"/>
        <end position="646"/>
    </location>
</feature>
<comment type="function">
    <text evidence="1">Voltage-gated chloride channel. Chloride channels may have several functions including the regulation of cell volume, membrane potential stabilization and signal transduction (By similarity).</text>
</comment>
<comment type="subcellular location">
    <subcellularLocation>
        <location evidence="1">Membrane</location>
        <topology evidence="1">Multi-pass membrane protein</topology>
    </subcellularLocation>
</comment>
<comment type="similarity">
    <text evidence="5">Belongs to the chloride channel (TC 2.A.49) family.</text>
</comment>
<evidence type="ECO:0000250" key="1"/>
<evidence type="ECO:0000255" key="2"/>
<evidence type="ECO:0000255" key="3">
    <source>
        <dbReference type="PROSITE-ProRule" id="PRU00703"/>
    </source>
</evidence>
<evidence type="ECO:0000256" key="4">
    <source>
        <dbReference type="SAM" id="MobiDB-lite"/>
    </source>
</evidence>
<evidence type="ECO:0000305" key="5"/>
<keyword id="KW-0129">CBS domain</keyword>
<keyword id="KW-0868">Chloride</keyword>
<keyword id="KW-0869">Chloride channel</keyword>
<keyword id="KW-0407">Ion channel</keyword>
<keyword id="KW-0406">Ion transport</keyword>
<keyword id="KW-0472">Membrane</keyword>
<keyword id="KW-1185">Reference proteome</keyword>
<keyword id="KW-0677">Repeat</keyword>
<keyword id="KW-0812">Transmembrane</keyword>
<keyword id="KW-1133">Transmembrane helix</keyword>
<keyword id="KW-0813">Transport</keyword>
<keyword id="KW-0851">Voltage-gated channel</keyword>
<organism>
    <name type="scientific">Dictyostelium discoideum</name>
    <name type="common">Social amoeba</name>
    <dbReference type="NCBI Taxonomy" id="44689"/>
    <lineage>
        <taxon>Eukaryota</taxon>
        <taxon>Amoebozoa</taxon>
        <taxon>Evosea</taxon>
        <taxon>Eumycetozoa</taxon>
        <taxon>Dictyostelia</taxon>
        <taxon>Dictyosteliales</taxon>
        <taxon>Dictyosteliaceae</taxon>
        <taxon>Dictyostelium</taxon>
    </lineage>
</organism>
<reference key="1">
    <citation type="journal article" date="2005" name="Nature">
        <title>The genome of the social amoeba Dictyostelium discoideum.</title>
        <authorList>
            <person name="Eichinger L."/>
            <person name="Pachebat J.A."/>
            <person name="Gloeckner G."/>
            <person name="Rajandream M.A."/>
            <person name="Sucgang R."/>
            <person name="Berriman M."/>
            <person name="Song J."/>
            <person name="Olsen R."/>
            <person name="Szafranski K."/>
            <person name="Xu Q."/>
            <person name="Tunggal B."/>
            <person name="Kummerfeld S."/>
            <person name="Madera M."/>
            <person name="Konfortov B.A."/>
            <person name="Rivero F."/>
            <person name="Bankier A.T."/>
            <person name="Lehmann R."/>
            <person name="Hamlin N."/>
            <person name="Davies R."/>
            <person name="Gaudet P."/>
            <person name="Fey P."/>
            <person name="Pilcher K."/>
            <person name="Chen G."/>
            <person name="Saunders D."/>
            <person name="Sodergren E.J."/>
            <person name="Davis P."/>
            <person name="Kerhornou A."/>
            <person name="Nie X."/>
            <person name="Hall N."/>
            <person name="Anjard C."/>
            <person name="Hemphill L."/>
            <person name="Bason N."/>
            <person name="Farbrother P."/>
            <person name="Desany B."/>
            <person name="Just E."/>
            <person name="Morio T."/>
            <person name="Rost R."/>
            <person name="Churcher C.M."/>
            <person name="Cooper J."/>
            <person name="Haydock S."/>
            <person name="van Driessche N."/>
            <person name="Cronin A."/>
            <person name="Goodhead I."/>
            <person name="Muzny D.M."/>
            <person name="Mourier T."/>
            <person name="Pain A."/>
            <person name="Lu M."/>
            <person name="Harper D."/>
            <person name="Lindsay R."/>
            <person name="Hauser H."/>
            <person name="James K.D."/>
            <person name="Quiles M."/>
            <person name="Madan Babu M."/>
            <person name="Saito T."/>
            <person name="Buchrieser C."/>
            <person name="Wardroper A."/>
            <person name="Felder M."/>
            <person name="Thangavelu M."/>
            <person name="Johnson D."/>
            <person name="Knights A."/>
            <person name="Loulseged H."/>
            <person name="Mungall K.L."/>
            <person name="Oliver K."/>
            <person name="Price C."/>
            <person name="Quail M.A."/>
            <person name="Urushihara H."/>
            <person name="Hernandez J."/>
            <person name="Rabbinowitsch E."/>
            <person name="Steffen D."/>
            <person name="Sanders M."/>
            <person name="Ma J."/>
            <person name="Kohara Y."/>
            <person name="Sharp S."/>
            <person name="Simmonds M.N."/>
            <person name="Spiegler S."/>
            <person name="Tivey A."/>
            <person name="Sugano S."/>
            <person name="White B."/>
            <person name="Walker D."/>
            <person name="Woodward J.R."/>
            <person name="Winckler T."/>
            <person name="Tanaka Y."/>
            <person name="Shaulsky G."/>
            <person name="Schleicher M."/>
            <person name="Weinstock G.M."/>
            <person name="Rosenthal A."/>
            <person name="Cox E.C."/>
            <person name="Chisholm R.L."/>
            <person name="Gibbs R.A."/>
            <person name="Loomis W.F."/>
            <person name="Platzer M."/>
            <person name="Kay R.R."/>
            <person name="Williams J.G."/>
            <person name="Dear P.H."/>
            <person name="Noegel A.A."/>
            <person name="Barrell B.G."/>
            <person name="Kuspa A."/>
        </authorList>
    </citation>
    <scope>NUCLEOTIDE SEQUENCE [LARGE SCALE GENOMIC DNA]</scope>
    <source>
        <strain>AX4</strain>
    </source>
</reference>
<sequence>MSTSKYSKMISSKHGYKKTRIKNNTSDSDLFNLVMPKADVVGFKSKQGGISRQAISWAKFARLNNFYIWLFLAAVGLLGSIYLVAVDLIFKYVVFSWREAFMSLTENYFLQYLSFIAWTVALATGSCFIIKKICPAAVGSGIPDLKSIFSGFWNPFVVAPMVLLWKTIGLLLSYGSGLSIGKEGPYIHISATLANTLLSIKPFKSIAQNDTQRSQLLAACCALGVAATFGSPIGGVLFSIEATGTFYLISNYWRAFFTATVGAVGIKILLSNPSNDLLESFRTHFADLNLASAQLIAFIILGVLCGLLASLFISLYTKIYNWKKHNAELFKKITPFGEVIIVAAATAILSFPLKFLRLDHATAVHTMFTATPDSDNSEVLSELAVWTDSMPFNHGIILACFLYVVVKLVLTAVSITLPIPYGIYIPLFAIGSAVGRFVGELMLVLFPNSKEIYPTGYAVVGAAALCGGATRTVSSAMIILELTNDLTYMVPVLLGVVLSCGIGNLLNHSIYDCFLKNKNLPYLPFYKAKSDSLIARDVMKRDLYYVCQNTTLSQISNLLKRVDEHSIPVVSSDNDLQLIGTISTTTLEEVIAYHERLHSYSKSPLSLSDNGIDINDNDNNDNINNNQNNNNNNNNNNNNNNSNNQNNSLVSEAIEMNVLSDSDNDENNNLIPNIPINDNNIIIQNNIRNNNNNNFSDNNNNYNNNNYNNNNNNNNDNNTNNDNNINNNSNDINESISEETTIDLVQMELQNPWVVIDSSPFQIQETMPVRKIVFMFMMLGGNILYVTNKGKLTGVVAKTELVHQNNNKH</sequence>
<accession>Q54C67</accession>
<protein>
    <recommendedName>
        <fullName>Chloride channel protein F</fullName>
    </recommendedName>
</protein>
<proteinExistence type="inferred from homology"/>
<dbReference type="EMBL" id="AAFI02000199">
    <property type="protein sequence ID" value="EAL60917.1"/>
    <property type="molecule type" value="Genomic_DNA"/>
</dbReference>
<dbReference type="RefSeq" id="XP_629352.1">
    <property type="nucleotide sequence ID" value="XM_629350.1"/>
</dbReference>
<dbReference type="SMR" id="Q54C67"/>
<dbReference type="PaxDb" id="44689-DDB0233307"/>
<dbReference type="EnsemblProtists" id="EAL60917">
    <property type="protein sequence ID" value="EAL60917"/>
    <property type="gene ID" value="DDB_G0293130"/>
</dbReference>
<dbReference type="GeneID" id="8629076"/>
<dbReference type="KEGG" id="ddi:DDB_G0293130"/>
<dbReference type="dictyBase" id="DDB_G0293130">
    <property type="gene designation" value="clcF"/>
</dbReference>
<dbReference type="VEuPathDB" id="AmoebaDB:DDB_G0293130"/>
<dbReference type="eggNOG" id="KOG0476">
    <property type="taxonomic scope" value="Eukaryota"/>
</dbReference>
<dbReference type="HOGENOM" id="CLU_006904_2_0_1"/>
<dbReference type="InParanoid" id="Q54C67"/>
<dbReference type="OMA" id="TKIYNWK"/>
<dbReference type="PhylomeDB" id="Q54C67"/>
<dbReference type="Reactome" id="R-DDI-2672351">
    <property type="pathway name" value="Stimuli-sensing channels"/>
</dbReference>
<dbReference type="PRO" id="PR:Q54C67"/>
<dbReference type="Proteomes" id="UP000002195">
    <property type="component" value="Chromosome 6"/>
</dbReference>
<dbReference type="GO" id="GO:0034707">
    <property type="term" value="C:chloride channel complex"/>
    <property type="evidence" value="ECO:0007669"/>
    <property type="project" value="UniProtKB-KW"/>
</dbReference>
<dbReference type="GO" id="GO:0005247">
    <property type="term" value="F:voltage-gated chloride channel activity"/>
    <property type="evidence" value="ECO:0000318"/>
    <property type="project" value="GO_Central"/>
</dbReference>
<dbReference type="GO" id="GO:0006821">
    <property type="term" value="P:chloride transport"/>
    <property type="evidence" value="ECO:0000318"/>
    <property type="project" value="GO_Central"/>
</dbReference>
<dbReference type="CDD" id="cd03683">
    <property type="entry name" value="ClC_1_like"/>
    <property type="match status" value="1"/>
</dbReference>
<dbReference type="Gene3D" id="3.10.580.10">
    <property type="entry name" value="CBS-domain"/>
    <property type="match status" value="2"/>
</dbReference>
<dbReference type="Gene3D" id="1.10.3080.10">
    <property type="entry name" value="Clc chloride channel"/>
    <property type="match status" value="1"/>
</dbReference>
<dbReference type="InterPro" id="IPR000644">
    <property type="entry name" value="CBS_dom"/>
</dbReference>
<dbReference type="InterPro" id="IPR046342">
    <property type="entry name" value="CBS_dom_sf"/>
</dbReference>
<dbReference type="InterPro" id="IPR014743">
    <property type="entry name" value="Cl-channel_core"/>
</dbReference>
<dbReference type="InterPro" id="IPR050970">
    <property type="entry name" value="Cl_channel_volt-gated"/>
</dbReference>
<dbReference type="InterPro" id="IPR001807">
    <property type="entry name" value="ClC"/>
</dbReference>
<dbReference type="PANTHER" id="PTHR45720">
    <property type="entry name" value="CHLORIDE CHANNEL PROTEIN 2"/>
    <property type="match status" value="1"/>
</dbReference>
<dbReference type="PANTHER" id="PTHR45720:SF10">
    <property type="entry name" value="CHLORIDE CHANNEL PROTEIN 2"/>
    <property type="match status" value="1"/>
</dbReference>
<dbReference type="Pfam" id="PF00571">
    <property type="entry name" value="CBS"/>
    <property type="match status" value="1"/>
</dbReference>
<dbReference type="Pfam" id="PF00654">
    <property type="entry name" value="Voltage_CLC"/>
    <property type="match status" value="1"/>
</dbReference>
<dbReference type="PRINTS" id="PR00762">
    <property type="entry name" value="CLCHANNEL"/>
</dbReference>
<dbReference type="SUPFAM" id="SSF54631">
    <property type="entry name" value="CBS-domain pair"/>
    <property type="match status" value="1"/>
</dbReference>
<dbReference type="SUPFAM" id="SSF81340">
    <property type="entry name" value="Clc chloride channel"/>
    <property type="match status" value="1"/>
</dbReference>
<dbReference type="PROSITE" id="PS51371">
    <property type="entry name" value="CBS"/>
    <property type="match status" value="2"/>
</dbReference>
<gene>
    <name type="primary">clcF</name>
    <name type="ORF">DDB_G0293130</name>
</gene>
<name>CLCF_DICDI</name>